<comment type="function">
    <text evidence="1">The alpha subunit is responsible for the aldol cleavage of indoleglycerol phosphate to indole and glyceraldehyde 3-phosphate.</text>
</comment>
<comment type="catalytic activity">
    <reaction evidence="1">
        <text>(1S,2R)-1-C-(indol-3-yl)glycerol 3-phosphate + L-serine = D-glyceraldehyde 3-phosphate + L-tryptophan + H2O</text>
        <dbReference type="Rhea" id="RHEA:10532"/>
        <dbReference type="ChEBI" id="CHEBI:15377"/>
        <dbReference type="ChEBI" id="CHEBI:33384"/>
        <dbReference type="ChEBI" id="CHEBI:57912"/>
        <dbReference type="ChEBI" id="CHEBI:58866"/>
        <dbReference type="ChEBI" id="CHEBI:59776"/>
        <dbReference type="EC" id="4.2.1.20"/>
    </reaction>
</comment>
<comment type="pathway">
    <text evidence="1">Amino-acid biosynthesis; L-tryptophan biosynthesis; L-tryptophan from chorismate: step 5/5.</text>
</comment>
<comment type="subunit">
    <text evidence="1">Tetramer of two alpha and two beta chains.</text>
</comment>
<comment type="similarity">
    <text evidence="1">Belongs to the TrpA family.</text>
</comment>
<reference key="1">
    <citation type="journal article" date="2009" name="Infect. Immun.">
        <title>Comparative genomics reveal extensive transposon-mediated genomic plasticity and diversity among potential effector proteins within the genus Coxiella.</title>
        <authorList>
            <person name="Beare P.A."/>
            <person name="Unsworth N."/>
            <person name="Andoh M."/>
            <person name="Voth D.E."/>
            <person name="Omsland A."/>
            <person name="Gilk S.D."/>
            <person name="Williams K.P."/>
            <person name="Sobral B.W."/>
            <person name="Kupko J.J. III"/>
            <person name="Porcella S.F."/>
            <person name="Samuel J.E."/>
            <person name="Heinzen R.A."/>
        </authorList>
    </citation>
    <scope>NUCLEOTIDE SEQUENCE [LARGE SCALE GENOMIC DNA]</scope>
    <source>
        <strain>CbuK_Q154</strain>
    </source>
</reference>
<proteinExistence type="inferred from homology"/>
<dbReference type="EC" id="4.2.1.20" evidence="1"/>
<dbReference type="EMBL" id="CP001020">
    <property type="protein sequence ID" value="ACJ20231.1"/>
    <property type="molecule type" value="Genomic_DNA"/>
</dbReference>
<dbReference type="RefSeq" id="WP_005768469.1">
    <property type="nucleotide sequence ID" value="NC_011528.1"/>
</dbReference>
<dbReference type="SMR" id="B6J7I2"/>
<dbReference type="KEGG" id="cbc:CbuK_1023"/>
<dbReference type="HOGENOM" id="CLU_016734_0_0_6"/>
<dbReference type="UniPathway" id="UPA00035">
    <property type="reaction ID" value="UER00044"/>
</dbReference>
<dbReference type="GO" id="GO:0005829">
    <property type="term" value="C:cytosol"/>
    <property type="evidence" value="ECO:0007669"/>
    <property type="project" value="TreeGrafter"/>
</dbReference>
<dbReference type="GO" id="GO:0004834">
    <property type="term" value="F:tryptophan synthase activity"/>
    <property type="evidence" value="ECO:0007669"/>
    <property type="project" value="UniProtKB-UniRule"/>
</dbReference>
<dbReference type="CDD" id="cd04724">
    <property type="entry name" value="Tryptophan_synthase_alpha"/>
    <property type="match status" value="1"/>
</dbReference>
<dbReference type="FunFam" id="3.20.20.70:FF:000037">
    <property type="entry name" value="Tryptophan synthase alpha chain"/>
    <property type="match status" value="1"/>
</dbReference>
<dbReference type="Gene3D" id="3.20.20.70">
    <property type="entry name" value="Aldolase class I"/>
    <property type="match status" value="1"/>
</dbReference>
<dbReference type="HAMAP" id="MF_00131">
    <property type="entry name" value="Trp_synth_alpha"/>
    <property type="match status" value="1"/>
</dbReference>
<dbReference type="InterPro" id="IPR013785">
    <property type="entry name" value="Aldolase_TIM"/>
</dbReference>
<dbReference type="InterPro" id="IPR011060">
    <property type="entry name" value="RibuloseP-bd_barrel"/>
</dbReference>
<dbReference type="InterPro" id="IPR018204">
    <property type="entry name" value="Trp_synthase_alpha_AS"/>
</dbReference>
<dbReference type="InterPro" id="IPR002028">
    <property type="entry name" value="Trp_synthase_suA"/>
</dbReference>
<dbReference type="NCBIfam" id="TIGR00262">
    <property type="entry name" value="trpA"/>
    <property type="match status" value="1"/>
</dbReference>
<dbReference type="PANTHER" id="PTHR43406:SF1">
    <property type="entry name" value="TRYPTOPHAN SYNTHASE ALPHA CHAIN, CHLOROPLASTIC"/>
    <property type="match status" value="1"/>
</dbReference>
<dbReference type="PANTHER" id="PTHR43406">
    <property type="entry name" value="TRYPTOPHAN SYNTHASE, ALPHA CHAIN"/>
    <property type="match status" value="1"/>
</dbReference>
<dbReference type="Pfam" id="PF00290">
    <property type="entry name" value="Trp_syntA"/>
    <property type="match status" value="1"/>
</dbReference>
<dbReference type="SUPFAM" id="SSF51366">
    <property type="entry name" value="Ribulose-phoshate binding barrel"/>
    <property type="match status" value="1"/>
</dbReference>
<dbReference type="PROSITE" id="PS00167">
    <property type="entry name" value="TRP_SYNTHASE_ALPHA"/>
    <property type="match status" value="1"/>
</dbReference>
<name>TRPA_COXB1</name>
<sequence length="256" mass="27519">MNRIEQQFKKSPAYVAYLTAGDGGLERSLESLLALAKGGVNILEVGVPFSDPVADGPVIQEASIRALAQGTTLHDVLTLITSFRQHSEIPIILFTYFNPLLAAGDKIYQQMKSAGVDGCLVVDLPVEEAAPHLTACKTAKIAPILLISPSTTQERLKKINEHGEGMLYYVCRPGTTGVRATLPENFPAKMNQIKSMTSLPIVTGFGIANRKMAAQALQYADGFVIGSLFVKAIAEGISKNALTRLAQSLNPHYPNP</sequence>
<accession>B6J7I2</accession>
<protein>
    <recommendedName>
        <fullName evidence="1">Tryptophan synthase alpha chain</fullName>
        <ecNumber evidence="1">4.2.1.20</ecNumber>
    </recommendedName>
</protein>
<evidence type="ECO:0000255" key="1">
    <source>
        <dbReference type="HAMAP-Rule" id="MF_00131"/>
    </source>
</evidence>
<feature type="chain" id="PRO_1000095707" description="Tryptophan synthase alpha chain">
    <location>
        <begin position="1"/>
        <end position="256"/>
    </location>
</feature>
<feature type="active site" description="Proton acceptor" evidence="1">
    <location>
        <position position="44"/>
    </location>
</feature>
<feature type="active site" description="Proton acceptor" evidence="1">
    <location>
        <position position="55"/>
    </location>
</feature>
<organism>
    <name type="scientific">Coxiella burnetii (strain CbuK_Q154)</name>
    <name type="common">Coxiella burnetii (strain Q154)</name>
    <dbReference type="NCBI Taxonomy" id="434924"/>
    <lineage>
        <taxon>Bacteria</taxon>
        <taxon>Pseudomonadati</taxon>
        <taxon>Pseudomonadota</taxon>
        <taxon>Gammaproteobacteria</taxon>
        <taxon>Legionellales</taxon>
        <taxon>Coxiellaceae</taxon>
        <taxon>Coxiella</taxon>
    </lineage>
</organism>
<keyword id="KW-0028">Amino-acid biosynthesis</keyword>
<keyword id="KW-0057">Aromatic amino acid biosynthesis</keyword>
<keyword id="KW-0456">Lyase</keyword>
<keyword id="KW-0822">Tryptophan biosynthesis</keyword>
<gene>
    <name evidence="1" type="primary">trpA</name>
    <name type="ordered locus">CbuK_1023</name>
</gene>